<reference key="1">
    <citation type="submission" date="2007-04" db="EMBL/GenBank/DDBJ databases">
        <authorList>
            <consortium name="NIH - Mammalian Gene Collection (MGC) project"/>
        </authorList>
    </citation>
    <scope>NUCLEOTIDE SEQUENCE [LARGE SCALE MRNA]</scope>
    <source>
        <strain>Crossbred X Angus</strain>
        <strain>Hereford</strain>
        <tissue>Fetal brain</tissue>
        <tissue>Fetal liver</tissue>
        <tissue>Ileum</tissue>
    </source>
</reference>
<reference key="2">
    <citation type="journal article" date="1993" name="J. Biol. Chem.">
        <title>Characterization of glycoprotein II from bovine adrenal medullary chromaffin granules. Identification of components representing the secretory vesicle counterparts of the lysosomal-associated membrane glycoproteins (lamp-1 and lamp-2).</title>
        <authorList>
            <person name="Hieber A.D."/>
            <person name="Christie D.L."/>
        </authorList>
    </citation>
    <scope>NUCLEOTIDE SEQUENCE [MRNA] OF 2-409</scope>
    <scope>PARTIAL PROTEIN SEQUENCE</scope>
    <source>
        <tissue>Adrenal medulla</tissue>
    </source>
</reference>
<comment type="function">
    <text evidence="2">Lysosomal membrane glycoprotein which plays an important role in lysosome biogenesis, lysosomal pH regulation, autophagy and cholesterol homeostasis. Acts as an important regulator of lysosomal lumen pH regulation by acting as a direct inhibitor of the proton channel TMEM175, facilitating lysosomal acidification for optimal hydrolase activity. Also plays an important role in NK-cells cytotoxicity. Mechanistically, participates in cytotoxic granule movement to the cell surface and perforin trafficking to the lytic granule. In addition, protects NK-cells from degranulation-associated damage induced by their own cytotoxic granule content. Presents carbohydrate ligands to selectins.</text>
</comment>
<comment type="subunit">
    <text evidence="2">Interacts with ABCB9; this interaction strongly stabilizes ABCB9 and protects ABCB9 against lysosomal degradation. Interacts with FURIN. Interacts with TMEM175; inhibiting the proton channel activity of TMEM175.</text>
</comment>
<comment type="subcellular location">
    <subcellularLocation>
        <location evidence="2">Lysosome membrane</location>
        <topology evidence="4">Single-pass type I membrane protein</topology>
    </subcellularLocation>
    <subcellularLocation>
        <location evidence="2">Endosome membrane</location>
        <topology evidence="4">Single-pass type I membrane protein</topology>
    </subcellularLocation>
    <subcellularLocation>
        <location evidence="2">Late endosome membrane</location>
        <topology evidence="4">Single-pass type I membrane protein</topology>
    </subcellularLocation>
    <subcellularLocation>
        <location evidence="2">Cell membrane</location>
        <topology evidence="4">Single-pass type I membrane protein</topology>
    </subcellularLocation>
    <subcellularLocation>
        <location evidence="2">Cytolytic granule membrane</location>
        <topology evidence="4">Single-pass type I membrane protein</topology>
    </subcellularLocation>
    <text evidence="1 2">This protein shuttles between lysosomes, endosomes, and the plasma membrane (By similarity). Colocalizes with OSBPL1A at the late endosome (By similarity).</text>
</comment>
<comment type="PTM">
    <text evidence="2">O- and N-glycosylated; some of the N-glycans attached to LAMP-1 are polylactosaminoglycans.</text>
</comment>
<comment type="similarity">
    <text evidence="5">Belongs to the LAMP family.</text>
</comment>
<name>LAMP1_BOVIN</name>
<feature type="signal peptide" evidence="3">
    <location>
        <begin position="1"/>
        <end position="25"/>
    </location>
</feature>
<feature type="chain" id="PRO_0000017107" description="Lysosome-associated membrane glycoprotein 1">
    <location>
        <begin position="26"/>
        <end position="409"/>
    </location>
</feature>
<feature type="topological domain" description="Lumenal" evidence="4">
    <location>
        <begin position="26"/>
        <end position="374"/>
    </location>
</feature>
<feature type="transmembrane region" description="Helical" evidence="5">
    <location>
        <begin position="375"/>
        <end position="398"/>
    </location>
</feature>
<feature type="topological domain" description="Cytoplasmic" evidence="5">
    <location>
        <begin position="399"/>
        <end position="409"/>
    </location>
</feature>
<feature type="region of interest" description="First lumenal domain">
    <location>
        <begin position="26"/>
        <end position="187"/>
    </location>
</feature>
<feature type="region of interest" description="Disordered" evidence="6">
    <location>
        <begin position="180"/>
        <end position="207"/>
    </location>
</feature>
<feature type="region of interest" description="Hinge">
    <location>
        <begin position="188"/>
        <end position="219"/>
    </location>
</feature>
<feature type="region of interest" description="Second lumenal domain">
    <location>
        <begin position="220"/>
        <end position="374"/>
    </location>
</feature>
<feature type="compositionally biased region" description="Pro residues" evidence="6">
    <location>
        <begin position="194"/>
        <end position="207"/>
    </location>
</feature>
<feature type="glycosylation site" description="N-linked (GlcNAc...) asparagine" evidence="4">
    <location>
        <position position="34"/>
    </location>
</feature>
<feature type="glycosylation site" description="N-linked (GlcNAc...) asparagine" evidence="4">
    <location>
        <position position="59"/>
    </location>
</feature>
<feature type="glycosylation site" description="N-linked (GlcNAc...) asparagine" evidence="4">
    <location>
        <position position="72"/>
    </location>
</feature>
<feature type="glycosylation site" description="N-linked (GlcNAc...) asparagine" evidence="4">
    <location>
        <position position="80"/>
    </location>
</feature>
<feature type="glycosylation site" description="N-linked (GlcNAc...) asparagine" evidence="4">
    <location>
        <position position="103"/>
    </location>
</feature>
<feature type="glycosylation site" description="N-linked (GlcNAc...) asparagine" evidence="4">
    <location>
        <position position="117"/>
    </location>
</feature>
<feature type="glycosylation site" description="N-linked (GlcNAc...) asparagine" evidence="4">
    <location>
        <position position="126"/>
    </location>
</feature>
<feature type="glycosylation site" description="N-linked (GlcNAc...) asparagine" evidence="4">
    <location>
        <position position="146"/>
    </location>
</feature>
<feature type="glycosylation site" description="N-linked (GlcNAc...) asparagine" evidence="4">
    <location>
        <position position="161"/>
    </location>
</feature>
<feature type="glycosylation site" description="N-linked (GlcNAc...) asparagine" evidence="4">
    <location>
        <position position="179"/>
    </location>
</feature>
<feature type="glycosylation site" description="N-linked (GlcNAc...) asparagine" evidence="4">
    <location>
        <position position="215"/>
    </location>
</feature>
<feature type="glycosylation site" description="N-linked (GlcNAc...) asparagine" evidence="4">
    <location>
        <position position="220"/>
    </location>
</feature>
<feature type="glycosylation site" description="N-linked (GlcNAc...) asparagine" evidence="4">
    <location>
        <position position="241"/>
    </location>
</feature>
<feature type="glycosylation site" description="N-linked (GlcNAc...) asparagine" evidence="4">
    <location>
        <position position="253"/>
    </location>
</feature>
<feature type="glycosylation site" description="N-linked (GlcNAc...) asparagine" evidence="4">
    <location>
        <position position="260"/>
    </location>
</feature>
<feature type="glycosylation site" description="N-linked (GlcNAc...) asparagine" evidence="4">
    <location>
        <position position="285"/>
    </location>
</feature>
<feature type="glycosylation site" description="N-linked (GlcNAc...) asparagine" evidence="4">
    <location>
        <position position="299"/>
    </location>
</feature>
<feature type="glycosylation site" description="N-linked (GlcNAc...) asparagine" evidence="4">
    <location>
        <position position="314"/>
    </location>
</feature>
<feature type="disulfide bond" evidence="5">
    <location>
        <begin position="38"/>
        <end position="76"/>
    </location>
</feature>
<feature type="disulfide bond" evidence="5">
    <location>
        <begin position="151"/>
        <end position="187"/>
    </location>
</feature>
<feature type="disulfide bond" evidence="5">
    <location>
        <begin position="223"/>
        <end position="261"/>
    </location>
</feature>
<feature type="disulfide bond" evidence="5">
    <location>
        <begin position="330"/>
        <end position="367"/>
    </location>
</feature>
<feature type="sequence conflict" description="In Ref. 2; AAA30548." evidence="7" ref="2">
    <original>AAPGGA</original>
    <variation>RPPAAP</variation>
    <location>
        <begin position="2"/>
        <end position="7"/>
    </location>
</feature>
<gene>
    <name type="primary">LAMP1</name>
</gene>
<evidence type="ECO:0000250" key="1">
    <source>
        <dbReference type="UniProtKB" id="P05300"/>
    </source>
</evidence>
<evidence type="ECO:0000250" key="2">
    <source>
        <dbReference type="UniProtKB" id="P11279"/>
    </source>
</evidence>
<evidence type="ECO:0000250" key="3">
    <source>
        <dbReference type="UniProtKB" id="P14562"/>
    </source>
</evidence>
<evidence type="ECO:0000255" key="4"/>
<evidence type="ECO:0000255" key="5">
    <source>
        <dbReference type="PROSITE-ProRule" id="PRU00740"/>
    </source>
</evidence>
<evidence type="ECO:0000256" key="6">
    <source>
        <dbReference type="SAM" id="MobiDB-lite"/>
    </source>
</evidence>
<evidence type="ECO:0000305" key="7"/>
<protein>
    <recommendedName>
        <fullName>Lysosome-associated membrane glycoprotein 1</fullName>
        <shortName>LAMP-1</shortName>
        <shortName>Lysosome-associated membrane protein 1</shortName>
    </recommendedName>
    <alternativeName>
        <fullName>CD107 antigen-like family member A</fullName>
    </alternativeName>
    <alternativeName>
        <fullName>Chromaffin granule-associated membrane glycoprotein IIA</fullName>
    </alternativeName>
    <cdAntigenName>CD107a</cdAntigenName>
</protein>
<accession>Q05204</accession>
<accession>A2VE82</accession>
<accession>A5D7M2</accession>
<accession>Q17QC6</accession>
<organism>
    <name type="scientific">Bos taurus</name>
    <name type="common">Bovine</name>
    <dbReference type="NCBI Taxonomy" id="9913"/>
    <lineage>
        <taxon>Eukaryota</taxon>
        <taxon>Metazoa</taxon>
        <taxon>Chordata</taxon>
        <taxon>Craniata</taxon>
        <taxon>Vertebrata</taxon>
        <taxon>Euteleostomi</taxon>
        <taxon>Mammalia</taxon>
        <taxon>Eutheria</taxon>
        <taxon>Laurasiatheria</taxon>
        <taxon>Artiodactyla</taxon>
        <taxon>Ruminantia</taxon>
        <taxon>Pecora</taxon>
        <taxon>Bovidae</taxon>
        <taxon>Bovinae</taxon>
        <taxon>Bos</taxon>
    </lineage>
</organism>
<keyword id="KW-1003">Cell membrane</keyword>
<keyword id="KW-0903">Direct protein sequencing</keyword>
<keyword id="KW-1015">Disulfide bond</keyword>
<keyword id="KW-0967">Endosome</keyword>
<keyword id="KW-0325">Glycoprotein</keyword>
<keyword id="KW-0458">Lysosome</keyword>
<keyword id="KW-0472">Membrane</keyword>
<keyword id="KW-1185">Reference proteome</keyword>
<keyword id="KW-0732">Signal</keyword>
<keyword id="KW-0812">Transmembrane</keyword>
<keyword id="KW-1133">Transmembrane helix</keyword>
<dbReference type="EMBL" id="BC118436">
    <property type="protein sequence ID" value="AAI18437.1"/>
    <property type="molecule type" value="mRNA"/>
</dbReference>
<dbReference type="EMBL" id="BC133619">
    <property type="protein sequence ID" value="AAI33620.1"/>
    <property type="molecule type" value="mRNA"/>
</dbReference>
<dbReference type="EMBL" id="BC140610">
    <property type="protein sequence ID" value="AAI40611.1"/>
    <property type="molecule type" value="mRNA"/>
</dbReference>
<dbReference type="EMBL" id="L09113">
    <property type="protein sequence ID" value="AAA30548.1"/>
    <property type="molecule type" value="mRNA"/>
</dbReference>
<dbReference type="PIR" id="A46712">
    <property type="entry name" value="A46712"/>
</dbReference>
<dbReference type="RefSeq" id="NP_001068592.1">
    <property type="nucleotide sequence ID" value="NM_001075124.2"/>
</dbReference>
<dbReference type="SMR" id="Q05204"/>
<dbReference type="FunCoup" id="Q05204">
    <property type="interactions" value="1700"/>
</dbReference>
<dbReference type="STRING" id="9913.ENSBTAP00000042536"/>
<dbReference type="GlyCosmos" id="Q05204">
    <property type="glycosylation" value="18 sites, No reported glycans"/>
</dbReference>
<dbReference type="GlyGen" id="Q05204">
    <property type="glycosylation" value="18 sites"/>
</dbReference>
<dbReference type="PaxDb" id="9913-ENSBTAP00000042536"/>
<dbReference type="PeptideAtlas" id="Q05204"/>
<dbReference type="GeneID" id="281897"/>
<dbReference type="KEGG" id="bta:281897"/>
<dbReference type="CTD" id="3916"/>
<dbReference type="VEuPathDB" id="HostDB:ENSBTAG00000010242"/>
<dbReference type="eggNOG" id="KOG4818">
    <property type="taxonomic scope" value="Eukaryota"/>
</dbReference>
<dbReference type="HOGENOM" id="CLU_055379_2_0_1"/>
<dbReference type="InParanoid" id="Q05204"/>
<dbReference type="OMA" id="SSNQIHM"/>
<dbReference type="OrthoDB" id="10037042at2759"/>
<dbReference type="TreeFam" id="TF316339"/>
<dbReference type="Reactome" id="R-BTA-6798695">
    <property type="pathway name" value="Neutrophil degranulation"/>
</dbReference>
<dbReference type="Proteomes" id="UP000009136">
    <property type="component" value="Chromosome 12"/>
</dbReference>
<dbReference type="Bgee" id="ENSBTAG00000010242">
    <property type="expression patterns" value="Expressed in monocyte and 105 other cell types or tissues"/>
</dbReference>
<dbReference type="GO" id="GO:0005901">
    <property type="term" value="C:caveola"/>
    <property type="evidence" value="ECO:0000314"/>
    <property type="project" value="AgBase"/>
</dbReference>
<dbReference type="GO" id="GO:0101004">
    <property type="term" value="C:cytolytic granule membrane"/>
    <property type="evidence" value="ECO:0000250"/>
    <property type="project" value="UniProtKB"/>
</dbReference>
<dbReference type="GO" id="GO:0010008">
    <property type="term" value="C:endosome membrane"/>
    <property type="evidence" value="ECO:0000250"/>
    <property type="project" value="UniProtKB"/>
</dbReference>
<dbReference type="GO" id="GO:0031902">
    <property type="term" value="C:late endosome membrane"/>
    <property type="evidence" value="ECO:0000318"/>
    <property type="project" value="GO_Central"/>
</dbReference>
<dbReference type="GO" id="GO:0005765">
    <property type="term" value="C:lysosomal membrane"/>
    <property type="evidence" value="ECO:0000314"/>
    <property type="project" value="AgBase"/>
</dbReference>
<dbReference type="GO" id="GO:0045121">
    <property type="term" value="C:membrane raft"/>
    <property type="evidence" value="ECO:0000314"/>
    <property type="project" value="AgBase"/>
</dbReference>
<dbReference type="GO" id="GO:0005886">
    <property type="term" value="C:plasma membrane"/>
    <property type="evidence" value="ECO:0000318"/>
    <property type="project" value="GO_Central"/>
</dbReference>
<dbReference type="GO" id="GO:0008200">
    <property type="term" value="F:ion channel inhibitor activity"/>
    <property type="evidence" value="ECO:0000250"/>
    <property type="project" value="UniProtKB"/>
</dbReference>
<dbReference type="GO" id="GO:0072594">
    <property type="term" value="P:establishment of protein localization to organelle"/>
    <property type="evidence" value="ECO:0000318"/>
    <property type="project" value="GO_Central"/>
</dbReference>
<dbReference type="GO" id="GO:0007042">
    <property type="term" value="P:lysosomal lumen acidification"/>
    <property type="evidence" value="ECO:0000250"/>
    <property type="project" value="UniProtKB"/>
</dbReference>
<dbReference type="GO" id="GO:0050821">
    <property type="term" value="P:protein stabilization"/>
    <property type="evidence" value="ECO:0000250"/>
    <property type="project" value="CAFA"/>
</dbReference>
<dbReference type="CDD" id="cd12087">
    <property type="entry name" value="TM_EGFR-like"/>
    <property type="match status" value="1"/>
</dbReference>
<dbReference type="FunFam" id="2.40.160.110:FF:000005">
    <property type="entry name" value="Lysosome-associated membrane glycoprotein 1"/>
    <property type="match status" value="1"/>
</dbReference>
<dbReference type="FunFam" id="2.40.160.110:FF:000001">
    <property type="entry name" value="lysosome-associated membrane glycoprotein 2 isoform X2"/>
    <property type="match status" value="1"/>
</dbReference>
<dbReference type="Gene3D" id="2.40.160.110">
    <property type="match status" value="2"/>
</dbReference>
<dbReference type="InterPro" id="IPR048528">
    <property type="entry name" value="Lamp2-like_luminal"/>
</dbReference>
<dbReference type="InterPro" id="IPR048524">
    <property type="entry name" value="Lamp2-like_TM"/>
</dbReference>
<dbReference type="InterPro" id="IPR018134">
    <property type="entry name" value="LAMP_CS"/>
</dbReference>
<dbReference type="InterPro" id="IPR002000">
    <property type="entry name" value="Lysosome-assoc_membr_glycop"/>
</dbReference>
<dbReference type="PANTHER" id="PTHR11506">
    <property type="entry name" value="LYSOSOME-ASSOCIATED MEMBRANE GLYCOPROTEIN"/>
    <property type="match status" value="1"/>
</dbReference>
<dbReference type="PANTHER" id="PTHR11506:SF35">
    <property type="entry name" value="LYSOSOME-ASSOCIATED MEMBRANE GLYCOPROTEIN 5"/>
    <property type="match status" value="1"/>
</dbReference>
<dbReference type="Pfam" id="PF01299">
    <property type="entry name" value="Lamp2-like_luminal"/>
    <property type="match status" value="2"/>
</dbReference>
<dbReference type="Pfam" id="PF21222">
    <property type="entry name" value="Lamp2_2nd"/>
    <property type="match status" value="1"/>
</dbReference>
<dbReference type="PRINTS" id="PR00336">
    <property type="entry name" value="LYSASSOCTDMP"/>
</dbReference>
<dbReference type="PROSITE" id="PS00310">
    <property type="entry name" value="LAMP_1"/>
    <property type="match status" value="2"/>
</dbReference>
<dbReference type="PROSITE" id="PS00311">
    <property type="entry name" value="LAMP_2"/>
    <property type="match status" value="1"/>
</dbReference>
<dbReference type="PROSITE" id="PS51407">
    <property type="entry name" value="LAMP_3"/>
    <property type="match status" value="1"/>
</dbReference>
<sequence length="409" mass="44153">MAAPGGARRRPLLLLLFAGLVHGASAVFVVKNGNGTACIMADFSATFLTSYDTRSGPQNKSFELPAGAEVSNSSSCGKENASDSSLVITFGRGHTLTLIFTRNATRYEVQLMRFAYNLSDTDTFPNSSSTGVKTVESATDIKADINKTYRCVSETQVNMDNVTVTLRDAAIQAYLSSSNFSREETRCEQDLPTPTTPPQPAPTPAPASPAVFRYNVSGSNGTCLLASMGLQLNVTYRRVDNKTVTREFNVNPNKTTFGGNCSATLATLELHSENLLLLALQFVMNESSSRVFLQGVQLNLTLPDAKEGSFTATNSSLRALQATAGNSYKCNAEQRLRVTSSFSLNMFRVWLQAFRVDGDKFGPVEECQLDENSMLIPIAVGGALAGLVLIVLLAYLIGRKRSHAGYQTI</sequence>
<proteinExistence type="evidence at protein level"/>